<accession>C1CXU3</accession>
<organism>
    <name type="scientific">Deinococcus deserti (strain DSM 17065 / CIP 109153 / LMG 22923 / VCD115)</name>
    <dbReference type="NCBI Taxonomy" id="546414"/>
    <lineage>
        <taxon>Bacteria</taxon>
        <taxon>Thermotogati</taxon>
        <taxon>Deinococcota</taxon>
        <taxon>Deinococci</taxon>
        <taxon>Deinococcales</taxon>
        <taxon>Deinococcaceae</taxon>
        <taxon>Deinococcus</taxon>
    </lineage>
</organism>
<feature type="chain" id="PRO_1000205031" description="V-type ATP synthase alpha chain">
    <location>
        <begin position="1"/>
        <end position="582"/>
    </location>
</feature>
<feature type="binding site" evidence="1">
    <location>
        <begin position="231"/>
        <end position="238"/>
    </location>
    <ligand>
        <name>ATP</name>
        <dbReference type="ChEBI" id="CHEBI:30616"/>
    </ligand>
</feature>
<comment type="function">
    <text evidence="1">Produces ATP from ADP in the presence of a proton gradient across the membrane. The V-type alpha chain is a catalytic subunit.</text>
</comment>
<comment type="catalytic activity">
    <reaction evidence="1">
        <text>ATP + H2O + 4 H(+)(in) = ADP + phosphate + 5 H(+)(out)</text>
        <dbReference type="Rhea" id="RHEA:57720"/>
        <dbReference type="ChEBI" id="CHEBI:15377"/>
        <dbReference type="ChEBI" id="CHEBI:15378"/>
        <dbReference type="ChEBI" id="CHEBI:30616"/>
        <dbReference type="ChEBI" id="CHEBI:43474"/>
        <dbReference type="ChEBI" id="CHEBI:456216"/>
        <dbReference type="EC" id="7.1.2.2"/>
    </reaction>
</comment>
<comment type="similarity">
    <text evidence="1">Belongs to the ATPase alpha/beta chains family.</text>
</comment>
<name>VATA_DEIDV</name>
<keyword id="KW-0066">ATP synthesis</keyword>
<keyword id="KW-0067">ATP-binding</keyword>
<keyword id="KW-0375">Hydrogen ion transport</keyword>
<keyword id="KW-0406">Ion transport</keyword>
<keyword id="KW-0547">Nucleotide-binding</keyword>
<keyword id="KW-1185">Reference proteome</keyword>
<keyword id="KW-1278">Translocase</keyword>
<keyword id="KW-0813">Transport</keyword>
<protein>
    <recommendedName>
        <fullName evidence="1">V-type ATP synthase alpha chain</fullName>
        <ecNumber evidence="1">7.1.2.2</ecNumber>
    </recommendedName>
    <alternativeName>
        <fullName evidence="1">V-ATPase subunit A</fullName>
    </alternativeName>
</protein>
<dbReference type="EC" id="7.1.2.2" evidence="1"/>
<dbReference type="EMBL" id="CP001114">
    <property type="protein sequence ID" value="ACO44899.1"/>
    <property type="molecule type" value="Genomic_DNA"/>
</dbReference>
<dbReference type="RefSeq" id="WP_012692022.1">
    <property type="nucleotide sequence ID" value="NC_012526.1"/>
</dbReference>
<dbReference type="SMR" id="C1CXU3"/>
<dbReference type="STRING" id="546414.Deide_00990"/>
<dbReference type="PaxDb" id="546414-Deide_00990"/>
<dbReference type="KEGG" id="ddr:Deide_00990"/>
<dbReference type="eggNOG" id="COG1155">
    <property type="taxonomic scope" value="Bacteria"/>
</dbReference>
<dbReference type="HOGENOM" id="CLU_008162_3_1_0"/>
<dbReference type="OrthoDB" id="9803053at2"/>
<dbReference type="Proteomes" id="UP000002208">
    <property type="component" value="Chromosome"/>
</dbReference>
<dbReference type="GO" id="GO:0045259">
    <property type="term" value="C:proton-transporting ATP synthase complex"/>
    <property type="evidence" value="ECO:0007669"/>
    <property type="project" value="UniProtKB-ARBA"/>
</dbReference>
<dbReference type="GO" id="GO:0005524">
    <property type="term" value="F:ATP binding"/>
    <property type="evidence" value="ECO:0007669"/>
    <property type="project" value="UniProtKB-UniRule"/>
</dbReference>
<dbReference type="GO" id="GO:0046933">
    <property type="term" value="F:proton-transporting ATP synthase activity, rotational mechanism"/>
    <property type="evidence" value="ECO:0007669"/>
    <property type="project" value="UniProtKB-UniRule"/>
</dbReference>
<dbReference type="GO" id="GO:0046961">
    <property type="term" value="F:proton-transporting ATPase activity, rotational mechanism"/>
    <property type="evidence" value="ECO:0007669"/>
    <property type="project" value="InterPro"/>
</dbReference>
<dbReference type="GO" id="GO:0042777">
    <property type="term" value="P:proton motive force-driven plasma membrane ATP synthesis"/>
    <property type="evidence" value="ECO:0007669"/>
    <property type="project" value="UniProtKB-UniRule"/>
</dbReference>
<dbReference type="CDD" id="cd18111">
    <property type="entry name" value="ATP-synt_V_A-type_alpha_C"/>
    <property type="match status" value="1"/>
</dbReference>
<dbReference type="CDD" id="cd18119">
    <property type="entry name" value="ATP-synt_V_A-type_alpha_N"/>
    <property type="match status" value="1"/>
</dbReference>
<dbReference type="CDD" id="cd01134">
    <property type="entry name" value="V_A-ATPase_A"/>
    <property type="match status" value="1"/>
</dbReference>
<dbReference type="FunFam" id="2.40.30.20:FF:000002">
    <property type="entry name" value="V-type proton ATPase catalytic subunit A"/>
    <property type="match status" value="1"/>
</dbReference>
<dbReference type="Gene3D" id="2.40.30.20">
    <property type="match status" value="1"/>
</dbReference>
<dbReference type="Gene3D" id="2.40.50.100">
    <property type="match status" value="1"/>
</dbReference>
<dbReference type="Gene3D" id="1.10.1140.10">
    <property type="entry name" value="Bovine Mitochondrial F1-atpase, Atp Synthase Beta Chain, Chain D, domain 3"/>
    <property type="match status" value="1"/>
</dbReference>
<dbReference type="Gene3D" id="3.40.50.300">
    <property type="entry name" value="P-loop containing nucleotide triphosphate hydrolases"/>
    <property type="match status" value="1"/>
</dbReference>
<dbReference type="HAMAP" id="MF_00309">
    <property type="entry name" value="ATP_synth_A_arch"/>
    <property type="match status" value="1"/>
</dbReference>
<dbReference type="InterPro" id="IPR055190">
    <property type="entry name" value="ATP-synt_VA_C"/>
</dbReference>
<dbReference type="InterPro" id="IPR031686">
    <property type="entry name" value="ATP-synth_a_Xtn"/>
</dbReference>
<dbReference type="InterPro" id="IPR023366">
    <property type="entry name" value="ATP_synth_asu-like_sf"/>
</dbReference>
<dbReference type="InterPro" id="IPR020003">
    <property type="entry name" value="ATPase_a/bsu_AS"/>
</dbReference>
<dbReference type="InterPro" id="IPR004100">
    <property type="entry name" value="ATPase_F1/V1/A1_a/bsu_N"/>
</dbReference>
<dbReference type="InterPro" id="IPR036121">
    <property type="entry name" value="ATPase_F1/V1/A1_a/bsu_N_sf"/>
</dbReference>
<dbReference type="InterPro" id="IPR000194">
    <property type="entry name" value="ATPase_F1/V1/A1_a/bsu_nucl-bd"/>
</dbReference>
<dbReference type="InterPro" id="IPR024034">
    <property type="entry name" value="ATPase_F1/V1_b/a_C"/>
</dbReference>
<dbReference type="InterPro" id="IPR027417">
    <property type="entry name" value="P-loop_NTPase"/>
</dbReference>
<dbReference type="InterPro" id="IPR022878">
    <property type="entry name" value="V-ATPase_asu"/>
</dbReference>
<dbReference type="NCBIfam" id="NF003220">
    <property type="entry name" value="PRK04192.1"/>
    <property type="match status" value="1"/>
</dbReference>
<dbReference type="PANTHER" id="PTHR43607:SF1">
    <property type="entry name" value="H(+)-TRANSPORTING TWO-SECTOR ATPASE"/>
    <property type="match status" value="1"/>
</dbReference>
<dbReference type="PANTHER" id="PTHR43607">
    <property type="entry name" value="V-TYPE PROTON ATPASE CATALYTIC SUBUNIT A"/>
    <property type="match status" value="1"/>
</dbReference>
<dbReference type="Pfam" id="PF00006">
    <property type="entry name" value="ATP-synt_ab"/>
    <property type="match status" value="1"/>
</dbReference>
<dbReference type="Pfam" id="PF02874">
    <property type="entry name" value="ATP-synt_ab_N"/>
    <property type="match status" value="1"/>
</dbReference>
<dbReference type="Pfam" id="PF16886">
    <property type="entry name" value="ATP-synt_ab_Xtn"/>
    <property type="match status" value="1"/>
</dbReference>
<dbReference type="Pfam" id="PF22919">
    <property type="entry name" value="ATP-synt_VA_C"/>
    <property type="match status" value="1"/>
</dbReference>
<dbReference type="SUPFAM" id="SSF47917">
    <property type="entry name" value="C-terminal domain of alpha and beta subunits of F1 ATP synthase"/>
    <property type="match status" value="1"/>
</dbReference>
<dbReference type="SUPFAM" id="SSF50615">
    <property type="entry name" value="N-terminal domain of alpha and beta subunits of F1 ATP synthase"/>
    <property type="match status" value="1"/>
</dbReference>
<dbReference type="SUPFAM" id="SSF52540">
    <property type="entry name" value="P-loop containing nucleoside triphosphate hydrolases"/>
    <property type="match status" value="1"/>
</dbReference>
<dbReference type="PROSITE" id="PS00152">
    <property type="entry name" value="ATPASE_ALPHA_BETA"/>
    <property type="match status" value="1"/>
</dbReference>
<gene>
    <name evidence="1" type="primary">atpA</name>
    <name type="ordered locus">Deide_00990</name>
</gene>
<evidence type="ECO:0000255" key="1">
    <source>
        <dbReference type="HAMAP-Rule" id="MF_00309"/>
    </source>
</evidence>
<reference key="1">
    <citation type="journal article" date="2009" name="PLoS Genet.">
        <title>Alliance of proteomics and genomics to unravel the specificities of Sahara bacterium Deinococcus deserti.</title>
        <authorList>
            <person name="de Groot A."/>
            <person name="Dulermo R."/>
            <person name="Ortet P."/>
            <person name="Blanchard L."/>
            <person name="Guerin P."/>
            <person name="Fernandez B."/>
            <person name="Vacherie B."/>
            <person name="Dossat C."/>
            <person name="Jolivet E."/>
            <person name="Siguier P."/>
            <person name="Chandler M."/>
            <person name="Barakat M."/>
            <person name="Dedieu A."/>
            <person name="Barbe V."/>
            <person name="Heulin T."/>
            <person name="Sommer S."/>
            <person name="Achouak W."/>
            <person name="Armengaud J."/>
        </authorList>
    </citation>
    <scope>NUCLEOTIDE SEQUENCE [LARGE SCALE GENOMIC DNA]</scope>
    <source>
        <strain>DSM 17065 / CIP 109153 / LMG 22923 / VCD115</strain>
    </source>
</reference>
<sequence>MTQNKQGVVQSIAGPAVIADGMYGAKMYDIVRVGRERLVGEIIRLDGNTAFVQVYEDTSGLTVGEPVETTNLPLSVELGPGMLNGIYDGIQRPLDKIREASGDFIARGIEVSSLDRTKKWAFTPSVQPGDTVVGSGILGTVPEFSFTHKILTPPDKGGKLRWVAAAGEYTIDDTIAELEDGTKLRLAHYWPVRAPRPVQKKLDPSLPFLTGMRILDVLFPLVMGGAAAIPGPFGSGKTVTQQSVAKYGNADIVVYVGCGERGNEMTDVLVEFPELVDPKTGGPLMHRTILIANTSNMPVAAREASVYTGITLAEYFRDQGYSVSLMADSTSRWAEALREISSRLEEMPAEEGYPPYLGAKLAAFYERAGAVKTLSGDDGAVSVIGAVSPAGGDMSEPVTQATLRITGAFWRLDAGLARRRHFPAINWNGSYSLFTPILDKWYRQNVGPDFPELRQRITNLLQQEAALQEVVQLVGPDALQDNERLIIETGRMLRQDFLQQNGFDPVDASASMPKNYGLMKMFLKFYDEADLALKNGSTIDEIIQNPVIEKLARARYTPENEFAAYGEGVMDQLSTTFKGVKA</sequence>
<proteinExistence type="inferred from homology"/>